<keyword id="KW-0025">Alternative splicing</keyword>
<keyword id="KW-1048">Host nucleus</keyword>
<keyword id="KW-0472">Membrane</keyword>
<keyword id="KW-0694">RNA-binding</keyword>
<keyword id="KW-0468">Viral matrix protein</keyword>
<keyword id="KW-0946">Virion</keyword>
<organism>
    <name type="scientific">Influenza A virus (strain A/Swine/Colorado/1/1977 H3N2)</name>
    <dbReference type="NCBI Taxonomy" id="385645"/>
    <lineage>
        <taxon>Viruses</taxon>
        <taxon>Riboviria</taxon>
        <taxon>Orthornavirae</taxon>
        <taxon>Negarnaviricota</taxon>
        <taxon>Polyploviricotina</taxon>
        <taxon>Insthoviricetes</taxon>
        <taxon>Articulavirales</taxon>
        <taxon>Orthomyxoviridae</taxon>
        <taxon>Alphainfluenzavirus</taxon>
        <taxon>Alphainfluenzavirus influenzae</taxon>
        <taxon>Influenza A virus</taxon>
    </lineage>
</organism>
<sequence>MSLLTEVETYVLSIVPSGPLKAEIAQRLEDVFAGKNTDLEALMEWLKTRPILSPLTKGILGFVFTLTVPSERGLQRRRFVQNALNGNGDPNNMDKAVKLYRKLKREITFHGAKEIALSYSAGALASCMGLIYNRMGAVTTEVAFGLVCATCEQIADSQHRSHRQMVATTNPLIRHENRMVLASTTAKAMEQMAGSSEQAAEAMEVASQARQMVQAMRAIGTHPSSSAGLKDDLLENLQAYQKRMGVQMQRFK</sequence>
<comment type="function">
    <text evidence="1">Plays critical roles in virus replication, from virus entry and uncoating to assembly and budding of the virus particle. M1 binding to ribonucleocapsids (RNPs) in nucleus seems to inhibit viral transcription. Interaction of viral NEP with M1-RNP is thought to promote nuclear export of the complex, which is targeted to the virion assembly site at the apical plasma membrane in polarized epithelial cells. Interactions with NA and HA may bring M1, a non-raft-associated protein, into lipid rafts. Forms a continuous shell on the inner side of the lipid bilayer in virion, where it binds the RNP. During virus entry into cell, the M2 ion channel acidifies the internal virion core, inducing M1 dissociation from the RNP. M1-free RNPs are transported to the nucleus, where viral transcription and replication can take place.</text>
</comment>
<comment type="function">
    <text evidence="1">Determines the virion's shape: spherical or filamentous. Clinical isolates of influenza are characterized by the presence of significant proportion of filamentous virions, whereas after multiple passage on eggs or cell culture, virions have only spherical morphology. Filamentous virions are thought to be important to infect neighboring cells, and spherical virions more suited to spread through aerosol between hosts organisms.</text>
</comment>
<comment type="subunit">
    <text evidence="1">Homodimer and homomultimer. Interacts with NEP. Binds ribonucleocapsid by both interacting with genomic RNA and NP protein. May interact with HA and NA. Cannot bind NP without genomic RNA.</text>
</comment>
<comment type="subcellular location">
    <subcellularLocation>
        <location evidence="1">Virion membrane</location>
        <topology evidence="1">Peripheral membrane protein</topology>
        <orientation evidence="1">Cytoplasmic side</orientation>
    </subcellularLocation>
    <subcellularLocation>
        <location evidence="1">Host nucleus</location>
    </subcellularLocation>
</comment>
<comment type="alternative products">
    <event type="alternative splicing"/>
    <isoform>
        <id>Q9EA40-1</id>
        <name>M1</name>
        <sequence type="displayed"/>
    </isoform>
    <isoform>
        <id>Q288Z5-1</id>
        <name>M2</name>
        <sequence type="external"/>
    </isoform>
    <text>Only the first 9 residues are shared by the 2 isoforms.</text>
</comment>
<comment type="miscellaneous">
    <text evidence="1">Most abundant protein in virion. When expressed alone can form virus-like particles in transfected cells.</text>
</comment>
<comment type="similarity">
    <text evidence="1">Belongs to the influenza viruses Matrix protein M1 family.</text>
</comment>
<reference key="1">
    <citation type="journal article" date="2000" name="Virus Res.">
        <title>Genetic characterization of H3N2 influenza viruses isolated from pigs in North America, 1977-1999: evidence for wholly human and reassortant virus genotypes.</title>
        <authorList>
            <person name="Karasin A.I."/>
            <person name="Schutten M.M."/>
            <person name="Cooper L.A."/>
            <person name="Smith C.B."/>
            <person name="Subbarao K."/>
            <person name="Anderson G.A."/>
            <person name="Carman S."/>
            <person name="Olsen C.W."/>
        </authorList>
    </citation>
    <scope>NUCLEOTIDE SEQUENCE [GENOMIC RNA]</scope>
</reference>
<reference key="2">
    <citation type="submission" date="2006-03" db="EMBL/GenBank/DDBJ databases">
        <title>The NIAID influenza genome sequencing project.</title>
        <authorList>
            <person name="Ghedin E."/>
            <person name="Spiro D."/>
            <person name="Miller N."/>
            <person name="Zaborsky J."/>
            <person name="Feldblyum T."/>
            <person name="Subbu V."/>
            <person name="Shumway M."/>
            <person name="Sparenborg J."/>
            <person name="Groveman L."/>
            <person name="Halpin R."/>
            <person name="Sitz J."/>
            <person name="Koo H."/>
            <person name="Salzberg S.L."/>
            <person name="Webster R.G."/>
            <person name="Hoffmann E."/>
            <person name="Krauss S."/>
            <person name="Naeve C."/>
            <person name="Bao Y."/>
            <person name="Bolotov P."/>
            <person name="Dernovoy D."/>
            <person name="Kiryutin B."/>
            <person name="Lipman D.J."/>
            <person name="Tatusova T."/>
        </authorList>
    </citation>
    <scope>NUCLEOTIDE SEQUENCE [GENOMIC RNA]</scope>
</reference>
<dbReference type="EMBL" id="AF251391">
    <property type="protein sequence ID" value="AAG01745.1"/>
    <property type="molecule type" value="Genomic_RNA"/>
</dbReference>
<dbReference type="EMBL" id="CY009301">
    <property type="protein sequence ID" value="ABD61552.1"/>
    <property type="molecule type" value="Genomic_RNA"/>
</dbReference>
<dbReference type="SMR" id="Q9EA40"/>
<dbReference type="Proteomes" id="UP000009193">
    <property type="component" value="Genome"/>
</dbReference>
<dbReference type="GO" id="GO:0042025">
    <property type="term" value="C:host cell nucleus"/>
    <property type="evidence" value="ECO:0007669"/>
    <property type="project" value="UniProtKB-SubCell"/>
</dbReference>
<dbReference type="GO" id="GO:0016020">
    <property type="term" value="C:membrane"/>
    <property type="evidence" value="ECO:0007669"/>
    <property type="project" value="UniProtKB-KW"/>
</dbReference>
<dbReference type="GO" id="GO:0055036">
    <property type="term" value="C:virion membrane"/>
    <property type="evidence" value="ECO:0007669"/>
    <property type="project" value="UniProtKB-SubCell"/>
</dbReference>
<dbReference type="GO" id="GO:0003723">
    <property type="term" value="F:RNA binding"/>
    <property type="evidence" value="ECO:0007669"/>
    <property type="project" value="UniProtKB-UniRule"/>
</dbReference>
<dbReference type="GO" id="GO:0039660">
    <property type="term" value="F:structural constituent of virion"/>
    <property type="evidence" value="ECO:0007669"/>
    <property type="project" value="UniProtKB-UniRule"/>
</dbReference>
<dbReference type="GO" id="GO:0046761">
    <property type="term" value="P:viral budding from plasma membrane"/>
    <property type="evidence" value="ECO:0007669"/>
    <property type="project" value="UniProtKB-UniRule"/>
</dbReference>
<dbReference type="FunFam" id="1.10.10.180:FF:000001">
    <property type="entry name" value="Matrix protein 1"/>
    <property type="match status" value="1"/>
</dbReference>
<dbReference type="FunFam" id="1.20.91.10:FF:000001">
    <property type="entry name" value="Matrix protein 1"/>
    <property type="match status" value="1"/>
</dbReference>
<dbReference type="Gene3D" id="1.10.10.180">
    <property type="match status" value="1"/>
</dbReference>
<dbReference type="Gene3D" id="1.20.91.10">
    <property type="match status" value="1"/>
</dbReference>
<dbReference type="HAMAP" id="MF_04068">
    <property type="entry name" value="INFV_M1"/>
    <property type="match status" value="1"/>
</dbReference>
<dbReference type="InterPro" id="IPR036039">
    <property type="entry name" value="Flu_matrix_M1"/>
</dbReference>
<dbReference type="InterPro" id="IPR013188">
    <property type="entry name" value="Flu_matrix_M1_C"/>
</dbReference>
<dbReference type="InterPro" id="IPR001561">
    <property type="entry name" value="Flu_matrix_M1_N"/>
</dbReference>
<dbReference type="InterPro" id="IPR015423">
    <property type="entry name" value="Flu_matrix_M1_N_sub1"/>
</dbReference>
<dbReference type="InterPro" id="IPR015799">
    <property type="entry name" value="Flu_matrix_M1_N_sub2"/>
</dbReference>
<dbReference type="InterPro" id="IPR037533">
    <property type="entry name" value="INFV_M1"/>
</dbReference>
<dbReference type="Pfam" id="PF00598">
    <property type="entry name" value="Flu_M1"/>
    <property type="match status" value="1"/>
</dbReference>
<dbReference type="Pfam" id="PF08289">
    <property type="entry name" value="Flu_M1_C"/>
    <property type="match status" value="1"/>
</dbReference>
<dbReference type="SMART" id="SM00759">
    <property type="entry name" value="Flu_M1_C"/>
    <property type="match status" value="1"/>
</dbReference>
<dbReference type="SUPFAM" id="SSF48145">
    <property type="entry name" value="Influenza virus matrix protein M1"/>
    <property type="match status" value="1"/>
</dbReference>
<evidence type="ECO:0000255" key="1">
    <source>
        <dbReference type="HAMAP-Rule" id="MF_04068"/>
    </source>
</evidence>
<accession>Q9EA40</accession>
<feature type="chain" id="PRO_0000326298" description="Matrix protein 1">
    <location>
        <begin position="1"/>
        <end position="252"/>
    </location>
</feature>
<feature type="region of interest" description="Membrane-binding" evidence="1">
    <location>
        <begin position="1"/>
        <end position="164"/>
    </location>
</feature>
<feature type="region of interest" description="RNP-binding" evidence="1">
    <location>
        <begin position="165"/>
        <end position="252"/>
    </location>
</feature>
<feature type="short sequence motif" description="Nuclear localization signal" evidence="1">
    <location>
        <begin position="101"/>
        <end position="105"/>
    </location>
</feature>
<name>M1_I77A4</name>
<gene>
    <name evidence="1" type="primary">M</name>
</gene>
<protein>
    <recommendedName>
        <fullName evidence="1">Matrix protein 1</fullName>
        <shortName evidence="1">M1</shortName>
    </recommendedName>
</protein>
<proteinExistence type="inferred from homology"/>
<organismHost>
    <name type="scientific">Aves</name>
    <dbReference type="NCBI Taxonomy" id="8782"/>
</organismHost>
<organismHost>
    <name type="scientific">Cetacea</name>
    <name type="common">whales</name>
    <dbReference type="NCBI Taxonomy" id="9721"/>
</organismHost>
<organismHost>
    <name type="scientific">Homo sapiens</name>
    <name type="common">Human</name>
    <dbReference type="NCBI Taxonomy" id="9606"/>
</organismHost>
<organismHost>
    <name type="scientific">Phocidae</name>
    <name type="common">true seals</name>
    <dbReference type="NCBI Taxonomy" id="9709"/>
</organismHost>
<organismHost>
    <name type="scientific">Sus scrofa</name>
    <name type="common">Pig</name>
    <dbReference type="NCBI Taxonomy" id="9823"/>
</organismHost>